<name>FLIE_BUCBP</name>
<keyword id="KW-0975">Bacterial flagellum</keyword>
<keyword id="KW-1185">Reference proteome</keyword>
<evidence type="ECO:0000250" key="1"/>
<evidence type="ECO:0000305" key="2"/>
<accession>Q89B01</accession>
<comment type="subcellular location">
    <subcellularLocation>
        <location evidence="1">Bacterial flagellum basal body</location>
    </subcellularLocation>
</comment>
<comment type="similarity">
    <text evidence="2">Belongs to the FliE family.</text>
</comment>
<proteinExistence type="inferred from homology"/>
<gene>
    <name type="primary">fliE</name>
    <name type="ordered locus">bbp_067</name>
</gene>
<feature type="chain" id="PRO_0000105537" description="Flagellar hook-basal body complex protein FliE">
    <location>
        <begin position="1"/>
        <end position="100"/>
    </location>
</feature>
<protein>
    <recommendedName>
        <fullName>Flagellar hook-basal body complex protein FliE</fullName>
    </recommendedName>
</protein>
<dbReference type="EMBL" id="AE016826">
    <property type="protein sequence ID" value="AAO26803.1"/>
    <property type="molecule type" value="Genomic_DNA"/>
</dbReference>
<dbReference type="RefSeq" id="WP_011091204.1">
    <property type="nucleotide sequence ID" value="NC_004545.1"/>
</dbReference>
<dbReference type="SMR" id="Q89B01"/>
<dbReference type="STRING" id="224915.bbp_067"/>
<dbReference type="KEGG" id="bab:bbp_067"/>
<dbReference type="eggNOG" id="COG1677">
    <property type="taxonomic scope" value="Bacteria"/>
</dbReference>
<dbReference type="HOGENOM" id="CLU_147249_0_2_6"/>
<dbReference type="OrthoDB" id="8909229at2"/>
<dbReference type="Proteomes" id="UP000000601">
    <property type="component" value="Chromosome"/>
</dbReference>
<dbReference type="GO" id="GO:0009425">
    <property type="term" value="C:bacterial-type flagellum basal body"/>
    <property type="evidence" value="ECO:0007669"/>
    <property type="project" value="UniProtKB-SubCell"/>
</dbReference>
<dbReference type="GO" id="GO:0003774">
    <property type="term" value="F:cytoskeletal motor activity"/>
    <property type="evidence" value="ECO:0007669"/>
    <property type="project" value="InterPro"/>
</dbReference>
<dbReference type="GO" id="GO:0005198">
    <property type="term" value="F:structural molecule activity"/>
    <property type="evidence" value="ECO:0007669"/>
    <property type="project" value="InterPro"/>
</dbReference>
<dbReference type="GO" id="GO:0071973">
    <property type="term" value="P:bacterial-type flagellum-dependent cell motility"/>
    <property type="evidence" value="ECO:0007669"/>
    <property type="project" value="InterPro"/>
</dbReference>
<dbReference type="HAMAP" id="MF_00724">
    <property type="entry name" value="FliE"/>
    <property type="match status" value="1"/>
</dbReference>
<dbReference type="InterPro" id="IPR001624">
    <property type="entry name" value="FliE"/>
</dbReference>
<dbReference type="NCBIfam" id="TIGR00205">
    <property type="entry name" value="fliE"/>
    <property type="match status" value="1"/>
</dbReference>
<dbReference type="PANTHER" id="PTHR34653">
    <property type="match status" value="1"/>
</dbReference>
<dbReference type="PANTHER" id="PTHR34653:SF1">
    <property type="entry name" value="FLAGELLAR HOOK-BASAL BODY COMPLEX PROTEIN FLIE"/>
    <property type="match status" value="1"/>
</dbReference>
<dbReference type="Pfam" id="PF02049">
    <property type="entry name" value="FliE"/>
    <property type="match status" value="1"/>
</dbReference>
<dbReference type="PRINTS" id="PR01006">
    <property type="entry name" value="FLGHOOKFLIE"/>
</dbReference>
<sequence length="100" mass="11675">MKIQNINNNLYSDDVIPYLSTEKITHPKNFYENFTNALKKTSANERNIFDKINNSQIDESNSSLNDIMVDLQKISISIQFLVQVKNKLVESYQEIMNMQI</sequence>
<organism>
    <name type="scientific">Buchnera aphidicola subsp. Baizongia pistaciae (strain Bp)</name>
    <dbReference type="NCBI Taxonomy" id="224915"/>
    <lineage>
        <taxon>Bacteria</taxon>
        <taxon>Pseudomonadati</taxon>
        <taxon>Pseudomonadota</taxon>
        <taxon>Gammaproteobacteria</taxon>
        <taxon>Enterobacterales</taxon>
        <taxon>Erwiniaceae</taxon>
        <taxon>Buchnera</taxon>
    </lineage>
</organism>
<reference key="1">
    <citation type="journal article" date="2003" name="Proc. Natl. Acad. Sci. U.S.A.">
        <title>Reductive genome evolution in Buchnera aphidicola.</title>
        <authorList>
            <person name="van Ham R.C.H.J."/>
            <person name="Kamerbeek J."/>
            <person name="Palacios C."/>
            <person name="Rausell C."/>
            <person name="Abascal F."/>
            <person name="Bastolla U."/>
            <person name="Fernandez J.M."/>
            <person name="Jimenez L."/>
            <person name="Postigo M."/>
            <person name="Silva F.J."/>
            <person name="Tamames J."/>
            <person name="Viguera E."/>
            <person name="Latorre A."/>
            <person name="Valencia A."/>
            <person name="Moran F."/>
            <person name="Moya A."/>
        </authorList>
    </citation>
    <scope>NUCLEOTIDE SEQUENCE [LARGE SCALE GENOMIC DNA]</scope>
    <source>
        <strain>Bp</strain>
    </source>
</reference>